<keyword id="KW-0030">Aminoacyl-tRNA synthetase</keyword>
<keyword id="KW-0067">ATP-binding</keyword>
<keyword id="KW-0963">Cytoplasm</keyword>
<keyword id="KW-0436">Ligase</keyword>
<keyword id="KW-0479">Metal-binding</keyword>
<keyword id="KW-0547">Nucleotide-binding</keyword>
<keyword id="KW-0648">Protein biosynthesis</keyword>
<keyword id="KW-1185">Reference proteome</keyword>
<keyword id="KW-0862">Zinc</keyword>
<evidence type="ECO:0000250" key="1"/>
<evidence type="ECO:0000305" key="2"/>
<gene>
    <name type="primary">cysS</name>
    <name type="ordered locus">PM0945</name>
</gene>
<comment type="catalytic activity">
    <reaction>
        <text>tRNA(Cys) + L-cysteine + ATP = L-cysteinyl-tRNA(Cys) + AMP + diphosphate</text>
        <dbReference type="Rhea" id="RHEA:17773"/>
        <dbReference type="Rhea" id="RHEA-COMP:9661"/>
        <dbReference type="Rhea" id="RHEA-COMP:9679"/>
        <dbReference type="ChEBI" id="CHEBI:30616"/>
        <dbReference type="ChEBI" id="CHEBI:33019"/>
        <dbReference type="ChEBI" id="CHEBI:35235"/>
        <dbReference type="ChEBI" id="CHEBI:78442"/>
        <dbReference type="ChEBI" id="CHEBI:78517"/>
        <dbReference type="ChEBI" id="CHEBI:456215"/>
        <dbReference type="EC" id="6.1.1.16"/>
    </reaction>
</comment>
<comment type="cofactor">
    <cofactor evidence="1">
        <name>Zn(2+)</name>
        <dbReference type="ChEBI" id="CHEBI:29105"/>
    </cofactor>
    <text evidence="1">Binds 1 zinc ion per subunit.</text>
</comment>
<comment type="subunit">
    <text evidence="1">Monomer.</text>
</comment>
<comment type="subcellular location">
    <subcellularLocation>
        <location evidence="1">Cytoplasm</location>
    </subcellularLocation>
</comment>
<comment type="similarity">
    <text evidence="2">Belongs to the class-I aminoacyl-tRNA synthetase family.</text>
</comment>
<dbReference type="EC" id="6.1.1.16"/>
<dbReference type="EMBL" id="AE004439">
    <property type="protein sequence ID" value="AAK03029.1"/>
    <property type="molecule type" value="Genomic_DNA"/>
</dbReference>
<dbReference type="RefSeq" id="WP_010906936.1">
    <property type="nucleotide sequence ID" value="NC_002663.1"/>
</dbReference>
<dbReference type="SMR" id="P57890"/>
<dbReference type="STRING" id="272843.PM0945"/>
<dbReference type="EnsemblBacteria" id="AAK03029">
    <property type="protein sequence ID" value="AAK03029"/>
    <property type="gene ID" value="PM0945"/>
</dbReference>
<dbReference type="KEGG" id="pmu:PM0945"/>
<dbReference type="HOGENOM" id="CLU_013528_0_1_6"/>
<dbReference type="OrthoDB" id="9815130at2"/>
<dbReference type="Proteomes" id="UP000000809">
    <property type="component" value="Chromosome"/>
</dbReference>
<dbReference type="GO" id="GO:0005829">
    <property type="term" value="C:cytosol"/>
    <property type="evidence" value="ECO:0007669"/>
    <property type="project" value="TreeGrafter"/>
</dbReference>
<dbReference type="GO" id="GO:0005524">
    <property type="term" value="F:ATP binding"/>
    <property type="evidence" value="ECO:0007669"/>
    <property type="project" value="UniProtKB-UniRule"/>
</dbReference>
<dbReference type="GO" id="GO:0004817">
    <property type="term" value="F:cysteine-tRNA ligase activity"/>
    <property type="evidence" value="ECO:0007669"/>
    <property type="project" value="UniProtKB-UniRule"/>
</dbReference>
<dbReference type="GO" id="GO:0008270">
    <property type="term" value="F:zinc ion binding"/>
    <property type="evidence" value="ECO:0007669"/>
    <property type="project" value="UniProtKB-UniRule"/>
</dbReference>
<dbReference type="GO" id="GO:0006423">
    <property type="term" value="P:cysteinyl-tRNA aminoacylation"/>
    <property type="evidence" value="ECO:0007669"/>
    <property type="project" value="UniProtKB-UniRule"/>
</dbReference>
<dbReference type="CDD" id="cd07963">
    <property type="entry name" value="Anticodon_Ia_Cys"/>
    <property type="match status" value="1"/>
</dbReference>
<dbReference type="CDD" id="cd00672">
    <property type="entry name" value="CysRS_core"/>
    <property type="match status" value="1"/>
</dbReference>
<dbReference type="FunFam" id="1.20.120.1910:FF:000001">
    <property type="entry name" value="Cysteine--tRNA ligase"/>
    <property type="match status" value="1"/>
</dbReference>
<dbReference type="FunFam" id="3.40.50.620:FF:000009">
    <property type="entry name" value="Cysteine--tRNA ligase"/>
    <property type="match status" value="1"/>
</dbReference>
<dbReference type="Gene3D" id="1.20.120.1910">
    <property type="entry name" value="Cysteine-tRNA ligase, C-terminal anti-codon recognition domain"/>
    <property type="match status" value="1"/>
</dbReference>
<dbReference type="Gene3D" id="3.40.50.620">
    <property type="entry name" value="HUPs"/>
    <property type="match status" value="1"/>
</dbReference>
<dbReference type="HAMAP" id="MF_00041">
    <property type="entry name" value="Cys_tRNA_synth"/>
    <property type="match status" value="1"/>
</dbReference>
<dbReference type="InterPro" id="IPR015803">
    <property type="entry name" value="Cys-tRNA-ligase"/>
</dbReference>
<dbReference type="InterPro" id="IPR015273">
    <property type="entry name" value="Cys-tRNA-synt_Ia_DALR"/>
</dbReference>
<dbReference type="InterPro" id="IPR024909">
    <property type="entry name" value="Cys-tRNA/MSH_ligase"/>
</dbReference>
<dbReference type="InterPro" id="IPR056411">
    <property type="entry name" value="CysS_C"/>
</dbReference>
<dbReference type="InterPro" id="IPR014729">
    <property type="entry name" value="Rossmann-like_a/b/a_fold"/>
</dbReference>
<dbReference type="InterPro" id="IPR032678">
    <property type="entry name" value="tRNA-synt_1_cat_dom"/>
</dbReference>
<dbReference type="InterPro" id="IPR009080">
    <property type="entry name" value="tRNAsynth_Ia_anticodon-bd"/>
</dbReference>
<dbReference type="NCBIfam" id="TIGR00435">
    <property type="entry name" value="cysS"/>
    <property type="match status" value="1"/>
</dbReference>
<dbReference type="PANTHER" id="PTHR10890:SF3">
    <property type="entry name" value="CYSTEINE--TRNA LIGASE, CYTOPLASMIC"/>
    <property type="match status" value="1"/>
</dbReference>
<dbReference type="PANTHER" id="PTHR10890">
    <property type="entry name" value="CYSTEINYL-TRNA SYNTHETASE"/>
    <property type="match status" value="1"/>
</dbReference>
<dbReference type="Pfam" id="PF23493">
    <property type="entry name" value="CysS_C"/>
    <property type="match status" value="1"/>
</dbReference>
<dbReference type="Pfam" id="PF09190">
    <property type="entry name" value="DALR_2"/>
    <property type="match status" value="1"/>
</dbReference>
<dbReference type="Pfam" id="PF01406">
    <property type="entry name" value="tRNA-synt_1e"/>
    <property type="match status" value="1"/>
</dbReference>
<dbReference type="PRINTS" id="PR00983">
    <property type="entry name" value="TRNASYNTHCYS"/>
</dbReference>
<dbReference type="SMART" id="SM00840">
    <property type="entry name" value="DALR_2"/>
    <property type="match status" value="1"/>
</dbReference>
<dbReference type="SUPFAM" id="SSF47323">
    <property type="entry name" value="Anticodon-binding domain of a subclass of class I aminoacyl-tRNA synthetases"/>
    <property type="match status" value="1"/>
</dbReference>
<dbReference type="SUPFAM" id="SSF52374">
    <property type="entry name" value="Nucleotidylyl transferase"/>
    <property type="match status" value="1"/>
</dbReference>
<feature type="chain" id="PRO_0000159451" description="Cysteine--tRNA ligase">
    <location>
        <begin position="1"/>
        <end position="459"/>
    </location>
</feature>
<feature type="short sequence motif" description="'HIGH' region">
    <location>
        <begin position="30"/>
        <end position="40"/>
    </location>
</feature>
<feature type="short sequence motif" description="'KMSKS' region">
    <location>
        <begin position="266"/>
        <end position="270"/>
    </location>
</feature>
<feature type="binding site" evidence="1">
    <location>
        <position position="28"/>
    </location>
    <ligand>
        <name>Zn(2+)</name>
        <dbReference type="ChEBI" id="CHEBI:29105"/>
    </ligand>
</feature>
<feature type="binding site" evidence="1">
    <location>
        <position position="209"/>
    </location>
    <ligand>
        <name>Zn(2+)</name>
        <dbReference type="ChEBI" id="CHEBI:29105"/>
    </ligand>
</feature>
<feature type="binding site" evidence="1">
    <location>
        <position position="234"/>
    </location>
    <ligand>
        <name>Zn(2+)</name>
        <dbReference type="ChEBI" id="CHEBI:29105"/>
    </ligand>
</feature>
<feature type="binding site" evidence="1">
    <location>
        <position position="238"/>
    </location>
    <ligand>
        <name>Zn(2+)</name>
        <dbReference type="ChEBI" id="CHEBI:29105"/>
    </ligand>
</feature>
<feature type="binding site" evidence="1">
    <location>
        <position position="269"/>
    </location>
    <ligand>
        <name>ATP</name>
        <dbReference type="ChEBI" id="CHEBI:30616"/>
    </ligand>
</feature>
<proteinExistence type="inferred from homology"/>
<reference key="1">
    <citation type="journal article" date="2001" name="Proc. Natl. Acad. Sci. U.S.A.">
        <title>Complete genomic sequence of Pasteurella multocida Pm70.</title>
        <authorList>
            <person name="May B.J."/>
            <person name="Zhang Q."/>
            <person name="Li L.L."/>
            <person name="Paustian M.L."/>
            <person name="Whittam T.S."/>
            <person name="Kapur V."/>
        </authorList>
    </citation>
    <scope>NUCLEOTIDE SEQUENCE [LARGE SCALE GENOMIC DNA]</scope>
    <source>
        <strain>Pm70</strain>
    </source>
</reference>
<organism>
    <name type="scientific">Pasteurella multocida (strain Pm70)</name>
    <dbReference type="NCBI Taxonomy" id="272843"/>
    <lineage>
        <taxon>Bacteria</taxon>
        <taxon>Pseudomonadati</taxon>
        <taxon>Pseudomonadota</taxon>
        <taxon>Gammaproteobacteria</taxon>
        <taxon>Pasteurellales</taxon>
        <taxon>Pasteurellaceae</taxon>
        <taxon>Pasteurella</taxon>
    </lineage>
</organism>
<accession>P57890</accession>
<sequence length="459" mass="52271">MLKIFNTLTREKEIFKPIHANKVGMYVCGITVYDLCHVGHGRTFVCFDVIARYLRYLGYDLTYVRNITDVDDKIIKRALENNETCNQLVEKMIAEMHKDFDALNVLRPDVEPRATHHIPEIIAMIEKLIARQHAYVSANGDVMFDVESFKEYGKLSRQNLEQLQAGARVEIVNVKKNPMDFVLWKMSKPGEPSWPSPWGEGRPGWHIECSAMNHKELGEHFDIHGGGSDLTFPHHENEIAQSCCAHSGRYVNYWIHSGMIMVDREKMSKSLGNFFTLREVLSLYDAESVRYFLLTAHYRSQLNYSEENLNLAHSALERLYTALRGTDPTAVATEGQNYLAAFREAMDDDFNTPKAISVLFEIAREINKLKNEDILKANALAARLRELAGILGLLYQDPEQFLQSGSDNDEVALIEALIKQRNDARAAKDWASADAARNKLAEMGVVLEDNVNGTTWRKQ</sequence>
<name>SYC_PASMU</name>
<protein>
    <recommendedName>
        <fullName>Cysteine--tRNA ligase</fullName>
        <ecNumber>6.1.1.16</ecNumber>
    </recommendedName>
    <alternativeName>
        <fullName>Cysteinyl-tRNA synthetase</fullName>
        <shortName>CysRS</shortName>
    </alternativeName>
</protein>